<dbReference type="EMBL" id="CP000671">
    <property type="protein sequence ID" value="ABQ98202.1"/>
    <property type="molecule type" value="Genomic_DNA"/>
</dbReference>
<dbReference type="SMR" id="A5UBQ1"/>
<dbReference type="KEGG" id="hip:CGSHiEE_03925"/>
<dbReference type="HOGENOM" id="CLU_005965_2_1_6"/>
<dbReference type="GO" id="GO:0005524">
    <property type="term" value="F:ATP binding"/>
    <property type="evidence" value="ECO:0007669"/>
    <property type="project" value="UniProtKB-UniRule"/>
</dbReference>
<dbReference type="GO" id="GO:0140662">
    <property type="term" value="F:ATP-dependent protein folding chaperone"/>
    <property type="evidence" value="ECO:0007669"/>
    <property type="project" value="InterPro"/>
</dbReference>
<dbReference type="GO" id="GO:0051082">
    <property type="term" value="F:unfolded protein binding"/>
    <property type="evidence" value="ECO:0007669"/>
    <property type="project" value="InterPro"/>
</dbReference>
<dbReference type="CDD" id="cd10234">
    <property type="entry name" value="ASKHA_NBD_HSP70_DnaK-like"/>
    <property type="match status" value="1"/>
</dbReference>
<dbReference type="FunFam" id="2.60.34.10:FF:000014">
    <property type="entry name" value="Chaperone protein DnaK HSP70"/>
    <property type="match status" value="1"/>
</dbReference>
<dbReference type="FunFam" id="1.20.1270.10:FF:000001">
    <property type="entry name" value="Molecular chaperone DnaK"/>
    <property type="match status" value="1"/>
</dbReference>
<dbReference type="FunFam" id="3.30.420.40:FF:000004">
    <property type="entry name" value="Molecular chaperone DnaK"/>
    <property type="match status" value="1"/>
</dbReference>
<dbReference type="FunFam" id="3.90.640.10:FF:000003">
    <property type="entry name" value="Molecular chaperone DnaK"/>
    <property type="match status" value="1"/>
</dbReference>
<dbReference type="Gene3D" id="1.20.1270.10">
    <property type="match status" value="1"/>
</dbReference>
<dbReference type="Gene3D" id="3.30.420.40">
    <property type="match status" value="2"/>
</dbReference>
<dbReference type="Gene3D" id="3.90.640.10">
    <property type="entry name" value="Actin, Chain A, domain 4"/>
    <property type="match status" value="1"/>
</dbReference>
<dbReference type="Gene3D" id="2.60.34.10">
    <property type="entry name" value="Substrate Binding Domain Of DNAk, Chain A, domain 1"/>
    <property type="match status" value="1"/>
</dbReference>
<dbReference type="HAMAP" id="MF_00332">
    <property type="entry name" value="DnaK"/>
    <property type="match status" value="1"/>
</dbReference>
<dbReference type="InterPro" id="IPR043129">
    <property type="entry name" value="ATPase_NBD"/>
</dbReference>
<dbReference type="InterPro" id="IPR012725">
    <property type="entry name" value="Chaperone_DnaK"/>
</dbReference>
<dbReference type="InterPro" id="IPR018181">
    <property type="entry name" value="Heat_shock_70_CS"/>
</dbReference>
<dbReference type="InterPro" id="IPR029048">
    <property type="entry name" value="HSP70_C_sf"/>
</dbReference>
<dbReference type="InterPro" id="IPR029047">
    <property type="entry name" value="HSP70_peptide-bd_sf"/>
</dbReference>
<dbReference type="InterPro" id="IPR013126">
    <property type="entry name" value="Hsp_70_fam"/>
</dbReference>
<dbReference type="NCBIfam" id="NF001413">
    <property type="entry name" value="PRK00290.1"/>
    <property type="match status" value="1"/>
</dbReference>
<dbReference type="NCBIfam" id="TIGR02350">
    <property type="entry name" value="prok_dnaK"/>
    <property type="match status" value="1"/>
</dbReference>
<dbReference type="PANTHER" id="PTHR19375">
    <property type="entry name" value="HEAT SHOCK PROTEIN 70KDA"/>
    <property type="match status" value="1"/>
</dbReference>
<dbReference type="Pfam" id="PF00012">
    <property type="entry name" value="HSP70"/>
    <property type="match status" value="1"/>
</dbReference>
<dbReference type="PRINTS" id="PR00301">
    <property type="entry name" value="HEATSHOCK70"/>
</dbReference>
<dbReference type="SUPFAM" id="SSF53067">
    <property type="entry name" value="Actin-like ATPase domain"/>
    <property type="match status" value="2"/>
</dbReference>
<dbReference type="SUPFAM" id="SSF100934">
    <property type="entry name" value="Heat shock protein 70kD (HSP70), C-terminal subdomain"/>
    <property type="match status" value="1"/>
</dbReference>
<dbReference type="SUPFAM" id="SSF100920">
    <property type="entry name" value="Heat shock protein 70kD (HSP70), peptide-binding domain"/>
    <property type="match status" value="1"/>
</dbReference>
<dbReference type="PROSITE" id="PS00297">
    <property type="entry name" value="HSP70_1"/>
    <property type="match status" value="1"/>
</dbReference>
<dbReference type="PROSITE" id="PS00329">
    <property type="entry name" value="HSP70_2"/>
    <property type="match status" value="1"/>
</dbReference>
<dbReference type="PROSITE" id="PS01036">
    <property type="entry name" value="HSP70_3"/>
    <property type="match status" value="1"/>
</dbReference>
<sequence>MGKIIGIDLGTTNSCVAVMDGDKARVIENAEGARTTPSIIAYTDNETLVGQPAKRQAITNPKNTLFAIKRLIGRRFESEEVQRDIKIMPFEITRADNGDAWVNVKGDKLAPPQISAEVLKKMKKTAEDFLGEAVTEAVITVPAYFNDAQRQATIDAGKIAGLDVKRIINEPTAAALAFGLGSSKENQVIAVYDLGGGTFDISIIEIDNFDGEQTFEVLATGGNTHLGGEDFDNRVIDYIIDEFKKEQNIDLRNDAMALQRVKEAAEKAKIELSSAQSTEVNLPYITADATGPKHLALNITRAKLEALVEDLVASSIESLKAVLKDAGKGVSEIHDIILVGGQTRMPLVQQKVAEFFGKEARKDVNPDEAVAIGAAVQGGVLKGDVKDVLLLDVTPLSLGIETMGGVMTTLIEKNTTIPTKKSQVFSTAEDNQSAVTIHVLQGERKRAADNKSLGQFNLEGINPAPRGMPQIEVTFDIDANGVINVSAKDKNTGKEQQIRIQASSGLSDEEIQQMVRDAEANADADRKFEEVVQARNQADGIAHATRKQIAEAGDALSVADKEKIETAVAELETAAKGEDKAEIEAKIEAVIKASEPLMQVAQAKAQQAGGEQPQQSSAKDDGVVDAEFEEVKDNK</sequence>
<accession>A5UBQ1</accession>
<comment type="function">
    <text evidence="1">Acts as a chaperone.</text>
</comment>
<comment type="induction">
    <text evidence="1">By stress conditions e.g. heat shock.</text>
</comment>
<comment type="similarity">
    <text evidence="1">Belongs to the heat shock protein 70 family.</text>
</comment>
<evidence type="ECO:0000255" key="1">
    <source>
        <dbReference type="HAMAP-Rule" id="MF_00332"/>
    </source>
</evidence>
<evidence type="ECO:0000256" key="2">
    <source>
        <dbReference type="SAM" id="MobiDB-lite"/>
    </source>
</evidence>
<feature type="chain" id="PRO_1000059571" description="Chaperone protein DnaK">
    <location>
        <begin position="1"/>
        <end position="635"/>
    </location>
</feature>
<feature type="region of interest" description="Disordered" evidence="2">
    <location>
        <begin position="602"/>
        <end position="635"/>
    </location>
</feature>
<feature type="compositionally biased region" description="Low complexity" evidence="2">
    <location>
        <begin position="602"/>
        <end position="617"/>
    </location>
</feature>
<feature type="modified residue" description="Phosphothreonine; by autocatalysis" evidence="1">
    <location>
        <position position="198"/>
    </location>
</feature>
<organism>
    <name type="scientific">Haemophilus influenzae (strain PittEE)</name>
    <dbReference type="NCBI Taxonomy" id="374930"/>
    <lineage>
        <taxon>Bacteria</taxon>
        <taxon>Pseudomonadati</taxon>
        <taxon>Pseudomonadota</taxon>
        <taxon>Gammaproteobacteria</taxon>
        <taxon>Pasteurellales</taxon>
        <taxon>Pasteurellaceae</taxon>
        <taxon>Haemophilus</taxon>
    </lineage>
</organism>
<proteinExistence type="inferred from homology"/>
<keyword id="KW-0067">ATP-binding</keyword>
<keyword id="KW-0143">Chaperone</keyword>
<keyword id="KW-0547">Nucleotide-binding</keyword>
<keyword id="KW-0597">Phosphoprotein</keyword>
<keyword id="KW-0346">Stress response</keyword>
<gene>
    <name evidence="1" type="primary">dnaK</name>
    <name type="ordered locus">CGSHiEE_03925</name>
</gene>
<reference key="1">
    <citation type="journal article" date="2007" name="Genome Biol.">
        <title>Characterization and modeling of the Haemophilus influenzae core and supragenomes based on the complete genomic sequences of Rd and 12 clinical nontypeable strains.</title>
        <authorList>
            <person name="Hogg J.S."/>
            <person name="Hu F.Z."/>
            <person name="Janto B."/>
            <person name="Boissy R."/>
            <person name="Hayes J."/>
            <person name="Keefe R."/>
            <person name="Post J.C."/>
            <person name="Ehrlich G.D."/>
        </authorList>
    </citation>
    <scope>NUCLEOTIDE SEQUENCE [LARGE SCALE GENOMIC DNA]</scope>
    <source>
        <strain>PittEE</strain>
    </source>
</reference>
<name>DNAK_HAEIE</name>
<protein>
    <recommendedName>
        <fullName evidence="1">Chaperone protein DnaK</fullName>
    </recommendedName>
    <alternativeName>
        <fullName evidence="1">HSP70</fullName>
    </alternativeName>
    <alternativeName>
        <fullName evidence="1">Heat shock 70 kDa protein</fullName>
    </alternativeName>
    <alternativeName>
        <fullName evidence="1">Heat shock protein 70</fullName>
    </alternativeName>
</protein>